<accession>P14904</accession>
<accession>D6VXI5</accession>
<accession>P22060</accession>
<proteinExistence type="evidence at protein level"/>
<protein>
    <recommendedName>
        <fullName evidence="25">Vacuolar aminopeptidase 1</fullName>
        <ecNumber evidence="9 13 15 16 17">3.4.11.22</ecNumber>
    </recommendedName>
    <alternativeName>
        <fullName evidence="30">Aminopeptidase yscI</fullName>
    </alternativeName>
    <alternativeName>
        <fullName evidence="31">Leucine aminopeptidase IV</fullName>
        <shortName evidence="31">LAPIV</shortName>
    </alternativeName>
    <alternativeName>
        <fullName evidence="26">Lysosomal aminopeptidase III</fullName>
    </alternativeName>
    <alternativeName>
        <fullName evidence="32">Polypeptidase</fullName>
    </alternativeName>
    <alternativeName>
        <fullName evidence="29">Vacuolar aminopeptidase I</fullName>
    </alternativeName>
</protein>
<reference key="1">
    <citation type="journal article" date="1989" name="FEBS Lett.">
        <title>Yeast vacuolar aminopeptidase yscI. Isolation and regulation of the APE1 (LAP4) structural gene.</title>
        <authorList>
            <person name="Cueva R."/>
            <person name="Garcia-Alvarez N."/>
            <person name="Suarez-Rendueles P."/>
        </authorList>
    </citation>
    <scope>NUCLEOTIDE SEQUENCE [GENOMIC DNA]</scope>
    <source>
        <strain>II-21</strain>
    </source>
</reference>
<reference key="2">
    <citation type="journal article" date="1989" name="J. Biol. Chem.">
        <title>Molecular cloning and sequencing of genomic DNA encoding aminopeptidase I from Saccharomyces cerevisiae.</title>
        <authorList>
            <person name="Chang Y.-H."/>
            <person name="Smith J.A."/>
        </authorList>
    </citation>
    <scope>NUCLEOTIDE SEQUENCE [GENOMIC DNA]</scope>
    <scope>PROTEIN SEQUENCE OF 46-63</scope>
</reference>
<reference key="3">
    <citation type="journal article" date="1993" name="Yeast">
        <title>The DNA sequence analysis of the HAP4-LAP4 region on chromosome XI of Saccharomyces cerevisiae suggests the presence of a second aspartate aminotransferase gene in yeast.</title>
        <authorList>
            <person name="Cheret G."/>
            <person name="Pallier C."/>
            <person name="Valens M."/>
            <person name="Daignan-Fornier B."/>
            <person name="Fukuhara H."/>
            <person name="Bolotin-Fukuhara M."/>
            <person name="Sor F."/>
        </authorList>
    </citation>
    <scope>NUCLEOTIDE SEQUENCE [GENOMIC DNA]</scope>
    <source>
        <strain>ATCC 204508 / S288c</strain>
    </source>
</reference>
<reference key="4">
    <citation type="journal article" date="1994" name="Nature">
        <title>Complete DNA sequence of yeast chromosome XI.</title>
        <authorList>
            <person name="Dujon B."/>
            <person name="Alexandraki D."/>
            <person name="Andre B."/>
            <person name="Ansorge W."/>
            <person name="Baladron V."/>
            <person name="Ballesta J.P.G."/>
            <person name="Banrevi A."/>
            <person name="Bolle P.-A."/>
            <person name="Bolotin-Fukuhara M."/>
            <person name="Bossier P."/>
            <person name="Bou G."/>
            <person name="Boyer J."/>
            <person name="Buitrago M.J."/>
            <person name="Cheret G."/>
            <person name="Colleaux L."/>
            <person name="Daignan-Fornier B."/>
            <person name="del Rey F."/>
            <person name="Dion C."/>
            <person name="Domdey H."/>
            <person name="Duesterhoeft A."/>
            <person name="Duesterhus S."/>
            <person name="Entian K.-D."/>
            <person name="Erfle H."/>
            <person name="Esteban P.F."/>
            <person name="Feldmann H."/>
            <person name="Fernandes L."/>
            <person name="Fobo G.M."/>
            <person name="Fritz C."/>
            <person name="Fukuhara H."/>
            <person name="Gabel C."/>
            <person name="Gaillon L."/>
            <person name="Garcia-Cantalejo J.M."/>
            <person name="Garcia-Ramirez J.J."/>
            <person name="Gent M.E."/>
            <person name="Ghazvini M."/>
            <person name="Goffeau A."/>
            <person name="Gonzalez A."/>
            <person name="Grothues D."/>
            <person name="Guerreiro P."/>
            <person name="Hegemann J.H."/>
            <person name="Hewitt N."/>
            <person name="Hilger F."/>
            <person name="Hollenberg C.P."/>
            <person name="Horaitis O."/>
            <person name="Indge K.J."/>
            <person name="Jacquier A."/>
            <person name="James C.M."/>
            <person name="Jauniaux J.-C."/>
            <person name="Jimenez A."/>
            <person name="Keuchel H."/>
            <person name="Kirchrath L."/>
            <person name="Kleine K."/>
            <person name="Koetter P."/>
            <person name="Legrain P."/>
            <person name="Liebl S."/>
            <person name="Louis E.J."/>
            <person name="Maia e Silva A."/>
            <person name="Marck C."/>
            <person name="Monnier A.-L."/>
            <person name="Moestl D."/>
            <person name="Mueller S."/>
            <person name="Obermaier B."/>
            <person name="Oliver S.G."/>
            <person name="Pallier C."/>
            <person name="Pascolo S."/>
            <person name="Pfeiffer F."/>
            <person name="Philippsen P."/>
            <person name="Planta R.J."/>
            <person name="Pohl F.M."/>
            <person name="Pohl T.M."/>
            <person name="Poehlmann R."/>
            <person name="Portetelle D."/>
            <person name="Purnelle B."/>
            <person name="Puzos V."/>
            <person name="Ramezani Rad M."/>
            <person name="Rasmussen S.W."/>
            <person name="Remacha M.A."/>
            <person name="Revuelta J.L."/>
            <person name="Richard G.-F."/>
            <person name="Rieger M."/>
            <person name="Rodrigues-Pousada C."/>
            <person name="Rose M."/>
            <person name="Rupp T."/>
            <person name="Santos M.A."/>
            <person name="Schwager C."/>
            <person name="Sensen C."/>
            <person name="Skala J."/>
            <person name="Soares H."/>
            <person name="Sor F."/>
            <person name="Stegemann J."/>
            <person name="Tettelin H."/>
            <person name="Thierry A."/>
            <person name="Tzermia M."/>
            <person name="Urrestarazu L.A."/>
            <person name="van Dyck L."/>
            <person name="van Vliet-Reedijk J.C."/>
            <person name="Valens M."/>
            <person name="Vandenbol M."/>
            <person name="Vilela C."/>
            <person name="Vissers S."/>
            <person name="von Wettstein D."/>
            <person name="Voss H."/>
            <person name="Wiemann S."/>
            <person name="Xu G."/>
            <person name="Zimmermann J."/>
            <person name="Haasemann M."/>
            <person name="Becker I."/>
            <person name="Mewes H.-W."/>
        </authorList>
    </citation>
    <scope>NUCLEOTIDE SEQUENCE [LARGE SCALE GENOMIC DNA]</scope>
    <source>
        <strain>ATCC 204508 / S288c</strain>
    </source>
</reference>
<reference key="5">
    <citation type="journal article" date="2014" name="G3 (Bethesda)">
        <title>The reference genome sequence of Saccharomyces cerevisiae: Then and now.</title>
        <authorList>
            <person name="Engel S.R."/>
            <person name="Dietrich F.S."/>
            <person name="Fisk D.G."/>
            <person name="Binkley G."/>
            <person name="Balakrishnan R."/>
            <person name="Costanzo M.C."/>
            <person name="Dwight S.S."/>
            <person name="Hitz B.C."/>
            <person name="Karra K."/>
            <person name="Nash R.S."/>
            <person name="Weng S."/>
            <person name="Wong E.D."/>
            <person name="Lloyd P."/>
            <person name="Skrzypek M.S."/>
            <person name="Miyasato S.R."/>
            <person name="Simison M."/>
            <person name="Cherry J.M."/>
        </authorList>
    </citation>
    <scope>GENOME REANNOTATION</scope>
    <source>
        <strain>ATCC 204508 / S288c</strain>
    </source>
</reference>
<reference key="6">
    <citation type="journal article" date="1941" name="J. Biol. Chem.">
        <title>Isolation and properties of a pure yeast polypeptidase.</title>
        <authorList>
            <person name="Johnson M.J."/>
        </authorList>
    </citation>
    <scope>IDENTIFICATION</scope>
    <scope>COFACTOR</scope>
</reference>
<reference key="7">
    <citation type="journal article" date="1971" name="Planta">
        <title>A lysosomal aminopeptidase isozyme in differentiating yeast cells and protoplasts.</title>
        <authorList>
            <person name="Matile P."/>
            <person name="Wiemken A."/>
            <person name="Guyer W."/>
        </authorList>
    </citation>
    <scope>SUBCELLULAR LOCATION</scope>
</reference>
<reference key="8">
    <citation type="journal article" date="1976" name="Biochim. Biophys. Acta">
        <title>Yeast aminopeptidase I. Chemical composition and catalytic properties.</title>
        <authorList>
            <person name="Metz G."/>
            <person name="Roehm K.H."/>
        </authorList>
    </citation>
    <scope>CATALYTIC ACTIVITY</scope>
    <scope>BIOPHYSICOCHEMICAL PROPERTIES</scope>
    <scope>COFACTOR</scope>
    <scope>GLYCOSYLATION</scope>
    <scope>SUBUNIT</scope>
    <scope>ACTIVITY REGULATION</scope>
</reference>
<reference key="9">
    <citation type="journal article" date="1978" name="Biochim. Biophys. Acta">
        <title>Subcellular localization and levels of aminopeptidases and dipeptidase in Saccharomyces cerevisiae.</title>
        <authorList>
            <person name="Frey J."/>
            <person name="Roehm K.H."/>
        </authorList>
    </citation>
    <scope>FUNCTION</scope>
    <scope>CATALYTIC ACTIVITY</scope>
    <scope>SUBCELLULAR LOCATION</scope>
</reference>
<reference key="10">
    <citation type="journal article" date="1983" name="J. Bacteriol.">
        <title>Isolation and characterization of aminopeptidase mutants of Saccharomyces cerevisiae.</title>
        <authorList>
            <person name="Trumbly R.J."/>
            <person name="Bradley G."/>
        </authorList>
    </citation>
    <scope>CATALYTIC ACTIVITY</scope>
    <scope>COFACTOR</scope>
</reference>
<reference key="11">
    <citation type="journal article" date="1985" name="Arch. Biochem. Biophys.">
        <title>Chloride as allosteric effector of yeast aminopeptidase I.</title>
        <authorList>
            <person name="Roehm K.H."/>
        </authorList>
    </citation>
    <scope>CATALYTIC ACTIVITY</scope>
    <scope>COFACTOR</scope>
    <scope>ACTIVITY REGULATION</scope>
</reference>
<reference key="12">
    <citation type="journal article" date="1985" name="Eur. J. Biochem.">
        <title>Metal binding to yeast aminopeptidase I.</title>
        <authorList>
            <person name="Roehm K.H."/>
        </authorList>
    </citation>
    <scope>COFACTOR</scope>
    <scope>ACTIVITY REGULATION</scope>
</reference>
<reference key="13">
    <citation type="journal article" date="1985" name="Yeast">
        <title>Proteinases, proteolysis and biological control in the yeast Saccharomyces cerevisiae.</title>
        <authorList>
            <person name="Achstetter T."/>
            <person name="Wolf D.H."/>
        </authorList>
    </citation>
    <scope>NOMENCLATURE</scope>
</reference>
<reference key="14">
    <citation type="journal article" date="1992" name="J. Cell Biol.">
        <title>Aminopeptidase I of Saccharomyces cerevisiae is localized to the vacuole independent of the secretory pathway.</title>
        <authorList>
            <person name="Klionsky D.J."/>
            <person name="Cueva R."/>
            <person name="Yaver D.S."/>
        </authorList>
    </citation>
    <scope>PROTEOLYTIC PROCESSING</scope>
</reference>
<reference key="15">
    <citation type="journal article" date="1995" name="EMBO J.">
        <title>Yeast aminopeptidase I is post-translationally sorted from the cytosol to the vacuole by a mechanism mediated by its bipartite N-terminal extension.</title>
        <authorList>
            <person name="Segui-Real B."/>
            <person name="Martinez M."/>
            <person name="Sandoval I.V."/>
        </authorList>
    </citation>
    <scope>PROTEOLYTIC PROCESSING</scope>
</reference>
<reference key="16">
    <citation type="journal article" date="1996" name="J. Cell Biol.">
        <title>Identification of a cytoplasm to vacuole targeting determinant in aminopeptidase I.</title>
        <authorList>
            <person name="Oda M.N."/>
            <person name="Scott S.V."/>
            <person name="Hefner-Gravink A."/>
            <person name="Caffarelli A.D."/>
            <person name="Klionsky D.J."/>
        </authorList>
    </citation>
    <scope>SUBCELLULAR LOCATION</scope>
    <scope>PROTEOLYTIC PROCESSING</scope>
</reference>
<reference key="17">
    <citation type="journal article" date="1996" name="Proc. Natl. Acad. Sci. U.S.A.">
        <title>Cytoplasm-to-vacuole targeting and autophagy employ the same machinery to deliver proteins to the yeast vacuole.</title>
        <authorList>
            <person name="Scott S.V."/>
            <person name="Hefner-Gravink A."/>
            <person name="Morano K.A."/>
            <person name="Noda T."/>
            <person name="Ohsumi Y."/>
            <person name="Klionsky D.J."/>
        </authorList>
    </citation>
    <scope>FUNCTION</scope>
    <scope>PROTEOLYTIC PROCESSING</scope>
</reference>
<reference key="18">
    <citation type="journal article" date="1997" name="J. Cell Biol.">
        <title>Transport of a large oligomeric protein by the cytoplasm to vacuole protein targeting pathway.</title>
        <authorList>
            <person name="Kim J."/>
            <person name="Scott S.V."/>
            <person name="Oda M.N."/>
            <person name="Klionsky D.J."/>
        </authorList>
    </citation>
    <scope>SUBCELLULAR LOCATION</scope>
    <scope>SUBUNIT</scope>
</reference>
<reference key="19">
    <citation type="journal article" date="1997" name="J. Cell Biol.">
        <title>Aminopeptidase I is targeted to the vacuole by a nonclassical vesicular mechanism.</title>
        <authorList>
            <person name="Scott S.V."/>
            <person name="Baba M."/>
            <person name="Ohsumi Y."/>
            <person name="Klionsky D.J."/>
        </authorList>
    </citation>
    <scope>FUNCTION</scope>
    <scope>SUBCELLULAR LOCATION</scope>
</reference>
<reference key="20">
    <citation type="journal article" date="1997" name="J. Cell Biol.">
        <title>Two distinct pathways for targeting proteins from the cytoplasm to the vacuole/lysosome.</title>
        <authorList>
            <person name="Baba M."/>
            <person name="Osumi M."/>
            <person name="Scott S.V."/>
            <person name="Klionsky D.J."/>
            <person name="Ohsumi Y."/>
        </authorList>
    </citation>
    <scope>FUNCTION</scope>
</reference>
<reference key="21">
    <citation type="journal article" date="2001" name="J. Biol. Chem.">
        <title>A new class of mutants deficient in dodecamerization of aminopeptidase 1 and vacuolar transport.</title>
        <authorList>
            <person name="Andrei-Selmer C."/>
            <person name="Knuppel A."/>
            <person name="Satyanarayana C."/>
            <person name="Heese C."/>
            <person name="Schu P.V."/>
        </authorList>
    </citation>
    <scope>SUBUNIT</scope>
</reference>
<reference key="22">
    <citation type="journal article" date="2001" name="J. Biol. Chem.">
        <title>Yol082p, a novel CVT protein involved in the selective targeting of aminopeptidase I to the yeast vacuole.</title>
        <authorList>
            <person name="Leber R."/>
            <person name="Silles E."/>
            <person name="Sandoval I.V."/>
            <person name="Mazon M.J."/>
        </authorList>
    </citation>
    <scope>FUNCTION</scope>
    <scope>INTERACTION WITH ATG19</scope>
</reference>
<reference key="23">
    <citation type="journal article" date="2001" name="Mol. Cell">
        <title>Cvt19 is a receptor for the cytoplasm-to-vacuole targeting pathway.</title>
        <authorList>
            <person name="Scott S.V."/>
            <person name="Guan J."/>
            <person name="Hutchins M.U."/>
            <person name="Kim J."/>
            <person name="Klionsky D.J."/>
        </authorList>
    </citation>
    <scope>FUNCTION</scope>
    <scope>INTERACTION WITH ATG19</scope>
</reference>
<reference key="24">
    <citation type="journal article" date="2003" name="Nature">
        <title>Global analysis of protein expression in yeast.</title>
        <authorList>
            <person name="Ghaemmaghami S."/>
            <person name="Huh W.-K."/>
            <person name="Bower K."/>
            <person name="Howson R.W."/>
            <person name="Belle A."/>
            <person name="Dephoure N."/>
            <person name="O'Shea E.K."/>
            <person name="Weissman J.S."/>
        </authorList>
    </citation>
    <scope>LEVEL OF PROTEIN EXPRESSION [LARGE SCALE ANALYSIS]</scope>
</reference>
<reference key="25">
    <citation type="journal article" date="2004" name="J. Biol. Chem.">
        <title>Cargo proteins facilitate the formation of transport vesicles in the cytoplasm to vacuole targeting pathway.</title>
        <authorList>
            <person name="Shintani T."/>
            <person name="Klionsky D.J."/>
        </authorList>
    </citation>
    <scope>FUNCTION</scope>
</reference>
<reference key="26">
    <citation type="journal article" date="2007" name="Acta Crystallogr. F">
        <title>Crystallization of Saccharomyces cerevisiae aminopeptidase 1, the major cargo protein of the Cvt pathway.</title>
        <authorList>
            <person name="Adachi W."/>
            <person name="Suzuki N.N."/>
            <person name="Fujioka Y."/>
            <person name="Suzuki K."/>
            <person name="Ohsumi Y."/>
            <person name="Inagaki F."/>
        </authorList>
    </citation>
    <scope>CRYSTALLIZATION</scope>
</reference>
<reference key="27">
    <citation type="journal article" date="2008" name="Methods Enzymol.">
        <title>Aminopeptidase I enzymatic activity.</title>
        <authorList>
            <person name="Schu P."/>
        </authorList>
    </citation>
    <scope>CATALYTIC ACTIVITY</scope>
</reference>
<reference key="28">
    <citation type="journal article" date="2008" name="Mol. Cell. Proteomics">
        <title>A multidimensional chromatography technology for in-depth phosphoproteome analysis.</title>
        <authorList>
            <person name="Albuquerque C.P."/>
            <person name="Smolka M.B."/>
            <person name="Payne S.H."/>
            <person name="Bafna V."/>
            <person name="Eng J."/>
            <person name="Zhou H."/>
        </authorList>
    </citation>
    <scope>PHOSPHORYLATION [LARGE SCALE ANALYSIS] AT SER-356</scope>
    <scope>IDENTIFICATION BY MASS SPECTROMETRY [LARGE SCALE ANALYSIS]</scope>
</reference>
<reference key="29">
    <citation type="journal article" date="2012" name="J. Biol. Chem.">
        <title>Propeptide of aminopeptidase 1 protein mediates aggregation and vesicle formation in cytoplasm-to-vacuole targeting pathway.</title>
        <authorList>
            <person name="Morales Quinones M."/>
            <person name="Winston J.T."/>
            <person name="Stromhaug P.E."/>
        </authorList>
    </citation>
    <scope>FUNCTION</scope>
</reference>
<reference evidence="37" key="30">
    <citation type="journal article" date="2015" name="Autophagy">
        <title>Structure of yeast Ape1 and its role in autophagic vesicle formation.</title>
        <authorList>
            <person name="Su M.Y."/>
            <person name="Peng W.H."/>
            <person name="Ho M.R."/>
            <person name="Su S.C."/>
            <person name="Chang Y.C."/>
            <person name="Chen G.C."/>
            <person name="Chang C.I."/>
        </authorList>
    </citation>
    <scope>X-RAY CRYSTALLOGRAPHY (2.50 ANGSTROMS) OF 46-514</scope>
</reference>
<reference evidence="38 39 40 41" key="31">
    <citation type="journal article" date="2016" name="Cell Rep.">
        <title>Structural basis for receptor-mediated selective autophagy of aminopeptidase I aggregates.</title>
        <authorList>
            <person name="Yamasaki A."/>
            <person name="Watanabe Y."/>
            <person name="Adachi W."/>
            <person name="Suzuki K."/>
            <person name="Matoba K."/>
            <person name="Kirisako H."/>
            <person name="Kumeta H."/>
            <person name="Nakatogawa H."/>
            <person name="Ohsumi Y."/>
            <person name="Inagaki F."/>
            <person name="Noda N.N."/>
        </authorList>
    </citation>
    <scope>X-RAY CRYSTALLOGRAPHY (1.83 ANGSTROMS) OF 46-514 IN COMPLEX WITH ZN(2+)</scope>
</reference>
<reference evidence="42" key="32">
    <citation type="journal article" date="2016" name="EMBO Rep.">
        <title>Higher-order assemblies of oligomeric cargo receptor complexes form the membrane scaffold of the Cvt vesicle.</title>
        <authorList>
            <person name="Bertipaglia C."/>
            <person name="Schneider S."/>
            <person name="Jakobi A.J."/>
            <person name="Tarafder A.K."/>
            <person name="Bykov Y.S."/>
            <person name="Picco A."/>
            <person name="Kukulski W."/>
            <person name="Kosinski J."/>
            <person name="Hagen W.J."/>
            <person name="Ravichandran A.C."/>
            <person name="Wilmanns M."/>
            <person name="Wilmanns M."/>
            <person name="Kaksonen M."/>
            <person name="Briggs J.A."/>
            <person name="Sachse C."/>
        </authorList>
    </citation>
    <scope>STRUCTURE BY ELECTRON MICROSCOPY (24.00 ANGSTROMS)</scope>
</reference>
<sequence length="514" mass="57093">MEEQREILEQLKKTLQMLTVEPSKNNQIANEEKEKKENENSWCILEHNYEDIAQEFIDFIYKNPTTYHVVSFFAELLDKHNFKYLSEKSNWQDSIGEDGGKFYTIRNGTNLSAFILGKNWRAEKGVGVIGSHVDALTVKLKPVSFKDTAEGYGRIAVAPYGGTLNELWLDRDLGIGGRLLYKKKGTNEIKSALVDSTPLPVCRIPSLAPHFGKPAEGPFDKEDQTIPVIGFPTPDEEGNEPPTDDEKKSPLFGKHCIHLLRYVAKLAGVEVSELIQMDLDLFDVQKGTIGGIGKHFLFAPRLDDRLCSFAAMIALICYAKDVNTEESDLFSTVTLYDNEEIGSLTRQGAKGGLLESVVERSSSAFTKKPVDLHTVWANSIILSADVNHLYNPNFPEVYLKNHFPVPNVGITLSLDPNGHMATDVVGTALVEELARRNGDKVQYFQIKNNSRSGGTIGPSLASQTGARTIDLGIAQLSMHSIRAATGSKDVGLGVKFFNGFFKHWRSVYDEFGEL</sequence>
<name>AMPL_YEAST</name>
<gene>
    <name evidence="28" type="primary">APE1</name>
    <name evidence="27" type="synonym">API</name>
    <name evidence="31" type="synonym">LAP4</name>
    <name evidence="28" type="synonym">YSC1</name>
    <name evidence="36" type="ordered locus">YKL103C</name>
    <name type="ORF">YKL455</name>
</gene>
<organism>
    <name type="scientific">Saccharomyces cerevisiae (strain ATCC 204508 / S288c)</name>
    <name type="common">Baker's yeast</name>
    <dbReference type="NCBI Taxonomy" id="559292"/>
    <lineage>
        <taxon>Eukaryota</taxon>
        <taxon>Fungi</taxon>
        <taxon>Dikarya</taxon>
        <taxon>Ascomycota</taxon>
        <taxon>Saccharomycotina</taxon>
        <taxon>Saccharomycetes</taxon>
        <taxon>Saccharomycetales</taxon>
        <taxon>Saccharomycetaceae</taxon>
        <taxon>Saccharomyces</taxon>
    </lineage>
</organism>
<dbReference type="EC" id="3.4.11.22" evidence="9 13 15 16 17"/>
<dbReference type="EMBL" id="Y07522">
    <property type="protein sequence ID" value="CAA68815.1"/>
    <property type="molecule type" value="Genomic_DNA"/>
</dbReference>
<dbReference type="EMBL" id="M25548">
    <property type="protein sequence ID" value="AAA34738.1"/>
    <property type="molecule type" value="Genomic_DNA"/>
</dbReference>
<dbReference type="EMBL" id="X71133">
    <property type="protein sequence ID" value="CAA50454.1"/>
    <property type="molecule type" value="Genomic_DNA"/>
</dbReference>
<dbReference type="EMBL" id="Z28103">
    <property type="protein sequence ID" value="CAA81943.1"/>
    <property type="molecule type" value="Genomic_DNA"/>
</dbReference>
<dbReference type="EMBL" id="BK006944">
    <property type="protein sequence ID" value="DAA09055.1"/>
    <property type="molecule type" value="Genomic_DNA"/>
</dbReference>
<dbReference type="PIR" id="A33879">
    <property type="entry name" value="A33879"/>
</dbReference>
<dbReference type="RefSeq" id="NP_012819.1">
    <property type="nucleotide sequence ID" value="NM_001179669.1"/>
</dbReference>
<dbReference type="PDB" id="4R8F">
    <property type="method" value="X-ray"/>
    <property type="resolution" value="2.50 A"/>
    <property type="chains" value="A/B/C/D=46-514"/>
</dbReference>
<dbReference type="PDB" id="5JGE">
    <property type="method" value="X-ray"/>
    <property type="resolution" value="1.91 A"/>
    <property type="chains" value="C/F=1-20"/>
</dbReference>
<dbReference type="PDB" id="5JGF">
    <property type="method" value="X-ray"/>
    <property type="resolution" value="1.83 A"/>
    <property type="chains" value="A/B/C/D=46-514"/>
</dbReference>
<dbReference type="PDB" id="5JH9">
    <property type="method" value="X-ray"/>
    <property type="resolution" value="2.10 A"/>
    <property type="chains" value="A/B/C/D=1-514"/>
</dbReference>
<dbReference type="PDB" id="5JHC">
    <property type="method" value="X-ray"/>
    <property type="resolution" value="3.40 A"/>
    <property type="chains" value="A/B/C/D/E/F/G/H/I/J/K/L/M/N/O/P/Q/R/S/T/U/V/W/X/Y/Z/a/b/c/d=1-22"/>
</dbReference>
<dbReference type="PDB" id="5JM9">
    <property type="method" value="EM"/>
    <property type="resolution" value="24.00 A"/>
    <property type="chains" value="A=1-514"/>
</dbReference>
<dbReference type="PDBsum" id="4R8F"/>
<dbReference type="PDBsum" id="5JGE"/>
<dbReference type="PDBsum" id="5JGF"/>
<dbReference type="PDBsum" id="5JH9"/>
<dbReference type="PDBsum" id="5JHC"/>
<dbReference type="PDBsum" id="5JM9"/>
<dbReference type="EMDB" id="EMD-8167"/>
<dbReference type="SMR" id="P14904"/>
<dbReference type="BioGRID" id="34031">
    <property type="interactions" value="91"/>
</dbReference>
<dbReference type="DIP" id="DIP-1409N"/>
<dbReference type="FunCoup" id="P14904">
    <property type="interactions" value="312"/>
</dbReference>
<dbReference type="IntAct" id="P14904">
    <property type="interactions" value="70"/>
</dbReference>
<dbReference type="MINT" id="P14904"/>
<dbReference type="STRING" id="4932.YKL103C"/>
<dbReference type="BindingDB" id="P14904"/>
<dbReference type="ChEMBL" id="CHEMBL1741175"/>
<dbReference type="MEROPS" id="M18.001"/>
<dbReference type="CarbonylDB" id="P14904"/>
<dbReference type="GlyCosmos" id="P14904">
    <property type="glycosylation" value="3 sites, No reported glycans"/>
</dbReference>
<dbReference type="GlyGen" id="P14904">
    <property type="glycosylation" value="3 sites"/>
</dbReference>
<dbReference type="iPTMnet" id="P14904"/>
<dbReference type="PaxDb" id="4932-YKL103C"/>
<dbReference type="PeptideAtlas" id="P14904"/>
<dbReference type="EnsemblFungi" id="YKL103C_mRNA">
    <property type="protein sequence ID" value="YKL103C"/>
    <property type="gene ID" value="YKL103C"/>
</dbReference>
<dbReference type="GeneID" id="853758"/>
<dbReference type="KEGG" id="sce:YKL103C"/>
<dbReference type="AGR" id="SGD:S000001586"/>
<dbReference type="SGD" id="S000001586">
    <property type="gene designation" value="APE1"/>
</dbReference>
<dbReference type="VEuPathDB" id="FungiDB:YKL103C"/>
<dbReference type="eggNOG" id="KOG2596">
    <property type="taxonomic scope" value="Eukaryota"/>
</dbReference>
<dbReference type="HOGENOM" id="CLU_019532_3_0_1"/>
<dbReference type="InParanoid" id="P14904"/>
<dbReference type="OMA" id="DWPIAKI"/>
<dbReference type="OrthoDB" id="9880441at2759"/>
<dbReference type="BioCyc" id="YEAST:YKL103C-MONOMER"/>
<dbReference type="BRENDA" id="3.4.11.22">
    <property type="organism ID" value="984"/>
</dbReference>
<dbReference type="BioGRID-ORCS" id="853758">
    <property type="hits" value="0 hits in 10 CRISPR screens"/>
</dbReference>
<dbReference type="CD-CODE" id="00C0C35B">
    <property type="entry name" value="Synthetic Condensate 000282"/>
</dbReference>
<dbReference type="CD-CODE" id="35D5A3ED">
    <property type="entry name" value="Synthetic Condensate 000344"/>
</dbReference>
<dbReference type="CD-CODE" id="6697AF75">
    <property type="entry name" value="Synthetic Condensate 000332"/>
</dbReference>
<dbReference type="CD-CODE" id="67785C55">
    <property type="entry name" value="Hypersomatic shock foci"/>
</dbReference>
<dbReference type="EvolutionaryTrace" id="P14904"/>
<dbReference type="PRO" id="PR:P14904"/>
<dbReference type="Proteomes" id="UP000002311">
    <property type="component" value="Chromosome XI"/>
</dbReference>
<dbReference type="RNAct" id="P14904">
    <property type="molecule type" value="protein"/>
</dbReference>
<dbReference type="GO" id="GO:0034270">
    <property type="term" value="C:Cvt complex"/>
    <property type="evidence" value="ECO:0000314"/>
    <property type="project" value="SGD"/>
</dbReference>
<dbReference type="GO" id="GO:0005737">
    <property type="term" value="C:cytoplasm"/>
    <property type="evidence" value="ECO:0007005"/>
    <property type="project" value="SGD"/>
</dbReference>
<dbReference type="GO" id="GO:0000324">
    <property type="term" value="C:fungal-type vacuole"/>
    <property type="evidence" value="ECO:0000314"/>
    <property type="project" value="SGD"/>
</dbReference>
<dbReference type="GO" id="GO:0042802">
    <property type="term" value="F:identical protein binding"/>
    <property type="evidence" value="ECO:0000353"/>
    <property type="project" value="IntAct"/>
</dbReference>
<dbReference type="GO" id="GO:0070006">
    <property type="term" value="F:metalloaminopeptidase activity"/>
    <property type="evidence" value="ECO:0000314"/>
    <property type="project" value="SGD"/>
</dbReference>
<dbReference type="GO" id="GO:0008270">
    <property type="term" value="F:zinc ion binding"/>
    <property type="evidence" value="ECO:0007669"/>
    <property type="project" value="InterPro"/>
</dbReference>
<dbReference type="GO" id="GO:0032258">
    <property type="term" value="P:cytoplasm to vacuole targeting by the Cvt pathway"/>
    <property type="evidence" value="ECO:0000315"/>
    <property type="project" value="SGD"/>
</dbReference>
<dbReference type="GO" id="GO:0006508">
    <property type="term" value="P:proteolysis"/>
    <property type="evidence" value="ECO:0007669"/>
    <property type="project" value="UniProtKB-KW"/>
</dbReference>
<dbReference type="CDD" id="cd05639">
    <property type="entry name" value="M18"/>
    <property type="match status" value="1"/>
</dbReference>
<dbReference type="FunFam" id="2.30.250.10:FF:000001">
    <property type="entry name" value="Aspartyl aminopeptidase 1"/>
    <property type="match status" value="1"/>
</dbReference>
<dbReference type="Gene3D" id="2.30.250.10">
    <property type="entry name" value="Aminopeptidase i, Domain 2"/>
    <property type="match status" value="1"/>
</dbReference>
<dbReference type="Gene3D" id="3.40.630.10">
    <property type="entry name" value="Zn peptidases"/>
    <property type="match status" value="1"/>
</dbReference>
<dbReference type="InterPro" id="IPR001948">
    <property type="entry name" value="Peptidase_M18"/>
</dbReference>
<dbReference type="InterPro" id="IPR023358">
    <property type="entry name" value="Peptidase_M18_dom2"/>
</dbReference>
<dbReference type="PANTHER" id="PTHR28570">
    <property type="entry name" value="ASPARTYL AMINOPEPTIDASE"/>
    <property type="match status" value="1"/>
</dbReference>
<dbReference type="PANTHER" id="PTHR28570:SF4">
    <property type="entry name" value="VACUOLAR AMINOPEPTIDASE 1"/>
    <property type="match status" value="1"/>
</dbReference>
<dbReference type="Pfam" id="PF02127">
    <property type="entry name" value="Peptidase_M18"/>
    <property type="match status" value="1"/>
</dbReference>
<dbReference type="PRINTS" id="PR00932">
    <property type="entry name" value="AMINO1PTASE"/>
</dbReference>
<dbReference type="SUPFAM" id="SSF101821">
    <property type="entry name" value="Aminopeptidase/glucanase lid domain"/>
    <property type="match status" value="1"/>
</dbReference>
<dbReference type="SUPFAM" id="SSF53187">
    <property type="entry name" value="Zn-dependent exopeptidases"/>
    <property type="match status" value="1"/>
</dbReference>
<feature type="propeptide" id="PRO_0000026806" description="Required for vacuolar localization. Mediates aggregation and vesicle formation in Cvt pathway" evidence="12 18 19">
    <location>
        <begin position="1"/>
        <end position="45"/>
    </location>
</feature>
<feature type="chain" id="PRO_0000026807" description="Vacuolar aminopeptidase 1">
    <location>
        <begin position="46"/>
        <end position="514"/>
    </location>
</feature>
<feature type="binding site" evidence="39 40">
    <location>
        <position position="132"/>
    </location>
    <ligand>
        <name>Zn(2+)</name>
        <dbReference type="ChEBI" id="CHEBI:29105"/>
        <label>1</label>
    </ligand>
</feature>
<feature type="binding site" evidence="1">
    <location>
        <position position="210"/>
    </location>
    <ligand>
        <name>substrate</name>
    </ligand>
</feature>
<feature type="binding site" evidence="39 40">
    <location>
        <position position="303"/>
    </location>
    <ligand>
        <name>Zn(2+)</name>
        <dbReference type="ChEBI" id="CHEBI:29105"/>
        <label>1</label>
    </ligand>
</feature>
<feature type="binding site" evidence="39 40">
    <location>
        <position position="303"/>
    </location>
    <ligand>
        <name>Zn(2+)</name>
        <dbReference type="ChEBI" id="CHEBI:29105"/>
        <label>2</label>
    </ligand>
</feature>
<feature type="binding site" evidence="1">
    <location>
        <position position="339"/>
    </location>
    <ligand>
        <name>substrate</name>
    </ligand>
</feature>
<feature type="binding site" evidence="39 40">
    <location>
        <position position="339"/>
    </location>
    <ligand>
        <name>Zn(2+)</name>
        <dbReference type="ChEBI" id="CHEBI:29105"/>
        <label>1</label>
    </ligand>
</feature>
<feature type="binding site" evidence="39">
    <location>
        <position position="339"/>
    </location>
    <ligand>
        <name>Zn(2+)</name>
        <dbReference type="ChEBI" id="CHEBI:29105"/>
        <label>2</label>
    </ligand>
</feature>
<feature type="binding site" evidence="39">
    <location>
        <position position="340"/>
    </location>
    <ligand>
        <name>Zn(2+)</name>
        <dbReference type="ChEBI" id="CHEBI:29105"/>
        <label>1</label>
    </ligand>
</feature>
<feature type="binding site" evidence="39 40">
    <location>
        <position position="340"/>
    </location>
    <ligand>
        <name>Zn(2+)</name>
        <dbReference type="ChEBI" id="CHEBI:29105"/>
        <label>2</label>
    </ligand>
</feature>
<feature type="binding site" evidence="1">
    <location>
        <position position="385"/>
    </location>
    <ligand>
        <name>substrate</name>
    </ligand>
</feature>
<feature type="binding site" evidence="39 40">
    <location>
        <position position="385"/>
    </location>
    <ligand>
        <name>Zn(2+)</name>
        <dbReference type="ChEBI" id="CHEBI:29105"/>
        <label>1</label>
    </ligand>
</feature>
<feature type="binding site" evidence="1">
    <location>
        <position position="388"/>
    </location>
    <ligand>
        <name>substrate</name>
    </ligand>
</feature>
<feature type="binding site" evidence="39 40">
    <location>
        <position position="479"/>
    </location>
    <ligand>
        <name>Zn(2+)</name>
        <dbReference type="ChEBI" id="CHEBI:29105"/>
        <label>2</label>
    </ligand>
</feature>
<feature type="site" description="Cleavage; by protease B (PrB/PRB1)" evidence="6">
    <location>
        <begin position="45"/>
        <end position="46"/>
    </location>
</feature>
<feature type="modified residue" description="Phosphoserine" evidence="43">
    <location>
        <position position="356"/>
    </location>
</feature>
<feature type="glycosylation site" description="N-linked (GlcNAc...) asparagine" evidence="2">
    <location>
        <position position="107"/>
    </location>
</feature>
<feature type="glycosylation site" description="N-linked (GlcNAc...) asparagine" evidence="2">
    <location>
        <position position="110"/>
    </location>
</feature>
<feature type="glycosylation site" description="N-linked (GlcNAc...) asparagine" evidence="2">
    <location>
        <position position="448"/>
    </location>
</feature>
<feature type="sequence conflict" description="In Ref. 1; CAA68815." evidence="33" ref="1">
    <original>T</original>
    <variation>S</variation>
    <location>
        <position position="233"/>
    </location>
</feature>
<feature type="sequence conflict" description="In Ref. 1; CAA68815." evidence="33" ref="1">
    <original>N</original>
    <variation>D</variation>
    <location>
        <position position="323"/>
    </location>
</feature>
<feature type="sequence conflict" description="In Ref. 1; CAA68815." evidence="33" ref="1">
    <original>D</original>
    <variation>E</variation>
    <location>
        <position position="328"/>
    </location>
</feature>
<feature type="sequence conflict" description="In Ref. 1; CAA68815." evidence="33" ref="1">
    <original>P</original>
    <variation>A</variation>
    <location>
        <position position="369"/>
    </location>
</feature>
<feature type="helix" evidence="45">
    <location>
        <begin position="1"/>
        <end position="17"/>
    </location>
</feature>
<feature type="helix" evidence="47">
    <location>
        <begin position="34"/>
        <end position="43"/>
    </location>
</feature>
<feature type="strand" evidence="47">
    <location>
        <begin position="45"/>
        <end position="47"/>
    </location>
</feature>
<feature type="helix" evidence="46">
    <location>
        <begin position="48"/>
        <end position="62"/>
    </location>
</feature>
<feature type="helix" evidence="46">
    <location>
        <begin position="66"/>
        <end position="79"/>
    </location>
</feature>
<feature type="turn" evidence="46">
    <location>
        <begin position="92"/>
        <end position="94"/>
    </location>
</feature>
<feature type="strand" evidence="46">
    <location>
        <begin position="100"/>
        <end position="106"/>
    </location>
</feature>
<feature type="turn" evidence="46">
    <location>
        <begin position="107"/>
        <end position="109"/>
    </location>
</feature>
<feature type="strand" evidence="46">
    <location>
        <begin position="110"/>
        <end position="116"/>
    </location>
</feature>
<feature type="helix" evidence="46">
    <location>
        <begin position="122"/>
        <end position="124"/>
    </location>
</feature>
<feature type="strand" evidence="46">
    <location>
        <begin position="127"/>
        <end position="132"/>
    </location>
</feature>
<feature type="strand" evidence="46">
    <location>
        <begin position="136"/>
        <end position="140"/>
    </location>
</feature>
<feature type="strand" evidence="46">
    <location>
        <begin position="152"/>
        <end position="154"/>
    </location>
</feature>
<feature type="strand" evidence="46">
    <location>
        <begin position="157"/>
        <end position="162"/>
    </location>
</feature>
<feature type="helix" evidence="46">
    <location>
        <begin position="166"/>
        <end position="168"/>
    </location>
</feature>
<feature type="strand" evidence="46">
    <location>
        <begin position="173"/>
        <end position="181"/>
    </location>
</feature>
<feature type="strand" evidence="46">
    <location>
        <begin position="190"/>
        <end position="195"/>
    </location>
</feature>
<feature type="helix" evidence="46">
    <location>
        <begin position="209"/>
        <end position="211"/>
    </location>
</feature>
<feature type="helix" evidence="46">
    <location>
        <begin position="213"/>
        <end position="215"/>
    </location>
</feature>
<feature type="turn" evidence="46">
    <location>
        <begin position="221"/>
        <end position="224"/>
    </location>
</feature>
<feature type="strand" evidence="46">
    <location>
        <begin position="228"/>
        <end position="230"/>
    </location>
</feature>
<feature type="helix" evidence="46">
    <location>
        <begin position="246"/>
        <end position="248"/>
    </location>
</feature>
<feature type="turn" evidence="44">
    <location>
        <begin position="250"/>
        <end position="254"/>
    </location>
</feature>
<feature type="helix" evidence="46">
    <location>
        <begin position="257"/>
        <end position="267"/>
    </location>
</feature>
<feature type="helix" evidence="46">
    <location>
        <begin position="271"/>
        <end position="273"/>
    </location>
</feature>
<feature type="strand" evidence="46">
    <location>
        <begin position="274"/>
        <end position="283"/>
    </location>
</feature>
<feature type="strand" evidence="46">
    <location>
        <begin position="288"/>
        <end position="291"/>
    </location>
</feature>
<feature type="strand" evidence="46">
    <location>
        <begin position="296"/>
        <end position="300"/>
    </location>
</feature>
<feature type="helix" evidence="46">
    <location>
        <begin position="302"/>
        <end position="319"/>
    </location>
</feature>
<feature type="turn" evidence="46">
    <location>
        <begin position="324"/>
        <end position="326"/>
    </location>
</feature>
<feature type="strand" evidence="46">
    <location>
        <begin position="330"/>
        <end position="337"/>
    </location>
</feature>
<feature type="helix" evidence="46">
    <location>
        <begin position="339"/>
        <end position="341"/>
    </location>
</feature>
<feature type="helix" evidence="46">
    <location>
        <begin position="349"/>
        <end position="351"/>
    </location>
</feature>
<feature type="helix" evidence="46">
    <location>
        <begin position="353"/>
        <end position="365"/>
    </location>
</feature>
<feature type="helix" evidence="46">
    <location>
        <begin position="372"/>
        <end position="377"/>
    </location>
</feature>
<feature type="strand" evidence="46">
    <location>
        <begin position="380"/>
        <end position="384"/>
    </location>
</feature>
<feature type="helix" evidence="46">
    <location>
        <begin position="395"/>
        <end position="397"/>
    </location>
</feature>
<feature type="strand" evidence="46">
    <location>
        <begin position="411"/>
        <end position="413"/>
    </location>
</feature>
<feature type="strand" evidence="46">
    <location>
        <begin position="418"/>
        <end position="420"/>
    </location>
</feature>
<feature type="helix" evidence="46">
    <location>
        <begin position="424"/>
        <end position="437"/>
    </location>
</feature>
<feature type="strand" evidence="46">
    <location>
        <begin position="442"/>
        <end position="444"/>
    </location>
</feature>
<feature type="helix" evidence="46">
    <location>
        <begin position="457"/>
        <end position="464"/>
    </location>
</feature>
<feature type="strand" evidence="46">
    <location>
        <begin position="467"/>
        <end position="472"/>
    </location>
</feature>
<feature type="strand" evidence="46">
    <location>
        <begin position="474"/>
        <end position="477"/>
    </location>
</feature>
<feature type="strand" evidence="46">
    <location>
        <begin position="480"/>
        <end position="486"/>
    </location>
</feature>
<feature type="helix" evidence="46">
    <location>
        <begin position="489"/>
        <end position="508"/>
    </location>
</feature>
<feature type="helix" evidence="47">
    <location>
        <begin position="509"/>
        <end position="511"/>
    </location>
</feature>
<evidence type="ECO:0000250" key="1">
    <source>
        <dbReference type="UniProtKB" id="Q9ULA0"/>
    </source>
</evidence>
<evidence type="ECO:0000255" key="2">
    <source>
        <dbReference type="PROSITE-ProRule" id="PRU00498"/>
    </source>
</evidence>
<evidence type="ECO:0000269" key="3">
    <source>
    </source>
</evidence>
<evidence type="ECO:0000269" key="4">
    <source>
    </source>
</evidence>
<evidence type="ECO:0000269" key="5">
    <source>
    </source>
</evidence>
<evidence type="ECO:0000269" key="6">
    <source>
    </source>
</evidence>
<evidence type="ECO:0000269" key="7">
    <source>
    </source>
</evidence>
<evidence type="ECO:0000269" key="8">
    <source>
    </source>
</evidence>
<evidence type="ECO:0000269" key="9">
    <source>
    </source>
</evidence>
<evidence type="ECO:0000269" key="10">
    <source>
    </source>
</evidence>
<evidence type="ECO:0000269" key="11">
    <source>
    </source>
</evidence>
<evidence type="ECO:0000269" key="12">
    <source>
    </source>
</evidence>
<evidence type="ECO:0000269" key="13">
    <source>
    </source>
</evidence>
<evidence type="ECO:0000269" key="14">
    <source>
    </source>
</evidence>
<evidence type="ECO:0000269" key="15">
    <source>
    </source>
</evidence>
<evidence type="ECO:0000269" key="16">
    <source>
    </source>
</evidence>
<evidence type="ECO:0000269" key="17">
    <source>
    </source>
</evidence>
<evidence type="ECO:0000269" key="18">
    <source>
    </source>
</evidence>
<evidence type="ECO:0000269" key="19">
    <source>
    </source>
</evidence>
<evidence type="ECO:0000269" key="20">
    <source>
    </source>
</evidence>
<evidence type="ECO:0000269" key="21">
    <source>
    </source>
</evidence>
<evidence type="ECO:0000269" key="22">
    <source>
    </source>
</evidence>
<evidence type="ECO:0000269" key="23">
    <source>
    </source>
</evidence>
<evidence type="ECO:0000269" key="24">
    <source ref="6"/>
</evidence>
<evidence type="ECO:0000303" key="25">
    <source>
    </source>
</evidence>
<evidence type="ECO:0000303" key="26">
    <source>
    </source>
</evidence>
<evidence type="ECO:0000303" key="27">
    <source>
    </source>
</evidence>
<evidence type="ECO:0000303" key="28">
    <source>
    </source>
</evidence>
<evidence type="ECO:0000303" key="29">
    <source>
    </source>
</evidence>
<evidence type="ECO:0000303" key="30">
    <source>
    </source>
</evidence>
<evidence type="ECO:0000303" key="31">
    <source>
    </source>
</evidence>
<evidence type="ECO:0000303" key="32">
    <source ref="6"/>
</evidence>
<evidence type="ECO:0000305" key="33"/>
<evidence type="ECO:0000305" key="34">
    <source>
    </source>
</evidence>
<evidence type="ECO:0000305" key="35">
    <source>
    </source>
</evidence>
<evidence type="ECO:0000312" key="36">
    <source>
        <dbReference type="SGD" id="S000001586"/>
    </source>
</evidence>
<evidence type="ECO:0007744" key="37">
    <source>
        <dbReference type="PDB" id="4R8F"/>
    </source>
</evidence>
<evidence type="ECO:0007744" key="38">
    <source>
        <dbReference type="PDB" id="5JGE"/>
    </source>
</evidence>
<evidence type="ECO:0007744" key="39">
    <source>
        <dbReference type="PDB" id="5JGF"/>
    </source>
</evidence>
<evidence type="ECO:0007744" key="40">
    <source>
        <dbReference type="PDB" id="5JH9"/>
    </source>
</evidence>
<evidence type="ECO:0007744" key="41">
    <source>
        <dbReference type="PDB" id="5JHC"/>
    </source>
</evidence>
<evidence type="ECO:0007744" key="42">
    <source>
        <dbReference type="PDB" id="5JM9"/>
    </source>
</evidence>
<evidence type="ECO:0007744" key="43">
    <source>
    </source>
</evidence>
<evidence type="ECO:0007829" key="44">
    <source>
        <dbReference type="PDB" id="4R8F"/>
    </source>
</evidence>
<evidence type="ECO:0007829" key="45">
    <source>
        <dbReference type="PDB" id="5JGE"/>
    </source>
</evidence>
<evidence type="ECO:0007829" key="46">
    <source>
        <dbReference type="PDB" id="5JGF"/>
    </source>
</evidence>
<evidence type="ECO:0007829" key="47">
    <source>
        <dbReference type="PDB" id="5JH9"/>
    </source>
</evidence>
<keyword id="KW-0002">3D-structure</keyword>
<keyword id="KW-0031">Aminopeptidase</keyword>
<keyword id="KW-0903">Direct protein sequencing</keyword>
<keyword id="KW-0325">Glycoprotein</keyword>
<keyword id="KW-0378">Hydrolase</keyword>
<keyword id="KW-0479">Metal-binding</keyword>
<keyword id="KW-0482">Metalloprotease</keyword>
<keyword id="KW-0597">Phosphoprotein</keyword>
<keyword id="KW-0645">Protease</keyword>
<keyword id="KW-0653">Protein transport</keyword>
<keyword id="KW-1185">Reference proteome</keyword>
<keyword id="KW-0813">Transport</keyword>
<keyword id="KW-0926">Vacuole</keyword>
<keyword id="KW-0862">Zinc</keyword>
<keyword id="KW-0865">Zymogen</keyword>
<comment type="function">
    <text evidence="4 5 8 10 13 20 22 23">Resident vacuolar enzyme that catalyzes the removal of amino acids from the N-terminus of peptides and proteins. Also acts as the major cargo protein of the cytoplasm-to-vacuole targeting (Cvt) pathway. The precursor form of aminopeptidase 1 (prApe1) assembles into dodecamers and the propeptide mediates the aggregation of dodecamers into higher multimers. The multimers are then recognized via the propeptide by their receptor ATG19, and ATG19 further interacts with ATG11, which tethers the APE1-ATG19 complex to the pre-autophagosomal structure (PAS). The cargo-receptor complex (also Cvt complex) is selectively enwrapped by a double-membrane structure termed the Cvt vesicle under vegetative growth conditions and by a similar but larger double-membrane structure termed the autophagosome under nitrogen starvation conditions. The Cvt vesicle or the autophagosome fuses with the vacuolar membrane and release its content in the vacuolar lumen. In the vacuole, prApe1 is processed into mature aminopeptidase 1 (mApe1).</text>
</comment>
<comment type="catalytic activity">
    <reaction evidence="9 13 15 16 17">
        <text>Release of an N-terminal amino acid, preferably a neutral or hydrophobic one, from a polypeptide. Aminoacyl-arylamides are poor substrates.</text>
        <dbReference type="EC" id="3.4.11.22"/>
    </reaction>
</comment>
<comment type="cofactor">
    <cofactor evidence="1 14 15 16 17 24">
        <name>Zn(2+)</name>
        <dbReference type="ChEBI" id="CHEBI:29105"/>
    </cofactor>
    <text evidence="1 14 15 16 17 24">Binds 2 Zn(2+) ions per subunit. The average amount of Zn(2+) bound at physiological metal concentrations will be lower than stoichiometric.</text>
</comment>
<comment type="activity regulation">
    <text evidence="14 15 16">Strongly and specifically activated by Cl(-) and Br(-), which act as positive allosteric effectors. Inactivated by metal-chelating agents.</text>
</comment>
<comment type="biophysicochemical properties">
    <phDependence>
        <text evidence="16">Optimum pH is 7-8.5.</text>
    </phDependence>
</comment>
<comment type="subunit">
    <text evidence="3 4 5 16 21">Homododecamer. The precursor form of aminopeptidase 1 (prApe1) assembles into dodecamers and further aggregates into higher multimers (the Ape1 complex) in the cytoplasm. The Ape1 complex is disaggregated in the vacuolar lumen, but mature aminopeptidase 1 (mApe1) retains its dodecameric form. Dodecamer assembly in the cytoplasm is essential for formation of an enzymatically active complex. If cytoplasmic homododecamerization of prApe1 is disturbed in mutants, homododecamers of mApe1 will form in the vacuole, but they are enzymatically inactive. Interacts with ATG19.</text>
</comment>
<comment type="interaction">
    <interactant intactId="EBI-2571">
        <id>P14904</id>
    </interactant>
    <interactant intactId="EBI-10398">
        <id>P22855</id>
        <label>AMS1</label>
    </interactant>
    <organismsDiffer>false</organismsDiffer>
    <experiments>3</experiments>
</comment>
<comment type="interaction">
    <interactant intactId="EBI-2571">
        <id>P14904</id>
    </interactant>
    <interactant intactId="EBI-2571">
        <id>P14904</id>
        <label>APE1</label>
    </interactant>
    <organismsDiffer>false</organismsDiffer>
    <experiments>3</experiments>
</comment>
<comment type="interaction">
    <interactant intactId="EBI-2571">
        <id>P14904</id>
    </interactant>
    <interactant intactId="EBI-29291">
        <id>P35193</id>
        <label>ATG19</label>
    </interactant>
    <organismsDiffer>false</organismsDiffer>
    <experiments>4</experiments>
</comment>
<comment type="subcellular location">
    <subcellularLocation>
        <location evidence="11 13 19">Vacuole</location>
    </subcellularLocation>
    <text evidence="21 22 23">Transported to the vacuole by the cytosol-to-vacuole targeting (Cvt) pathway.</text>
</comment>
<comment type="PTM">
    <text evidence="18">Synthesized in a precursor form (prApe1) that has an amino-terminal propeptide. The N-terminal extension of the 61 kDa precursor is proteolytically processed in two sequential steps. The first step involves proteinase A (PrA/PEP4) and produces a 55 kDa unstable intermediate (iAPI). The second step involves proteinase B (PrB/PRB1) and converts iAPI into the 50 kDa stable, mature enzyme (mApe1).</text>
</comment>
<comment type="miscellaneous">
    <text evidence="7">Present with 5730 molecules/cell in log phase SD medium.</text>
</comment>
<comment type="similarity">
    <text evidence="33">Belongs to the peptidase M18 family.</text>
</comment>
<comment type="caution">
    <text evidence="34 35">It is unsure whether this protein is glycosylated or not. PubMed:5147 has shown that a preparation of aminopeptidase 1 contains about 12% of conjugated carbohydrate, while PubMed:1400574 could not identify any glycosylation, which is in agreement with the fact that aminopeptidase 1 does not transit through the secretory pathway.</text>
</comment>